<protein>
    <recommendedName>
        <fullName>Kelch-like protein 3</fullName>
    </recommendedName>
</protein>
<name>KLHL3_PONAB</name>
<sequence>MEGESVKLSSQTLIQAGDDEKNQRTITVNPAHMGKAFKVMNELRSKQLLCDVMIVAEDVEIEAHRVVLAACSPYFCAMFTGDMSESKAKKIEIKDVDGQTLSKLIDYVYTAEIEVTEENVQVLLPAASLLQLMDVRQNCCDFLQSQLHPTNCLGIRAFADVHTCTDLLQQANAYAEQHFPEVMLGEEFLSLSLDQVCSLISSDKLTVSSEEKVFEAVISWINYEKGTRLEHMAKLMEHVRLPLLPRDYLVQTVEEEALIKNNNTCKDFLIEAMKYHLLPLDQRLLIKNPRTKPRTPVSLPKVMIVVGGQAPKAIRSVECYDFEEDRWDQIAELPSRRCRAGVVFMAGHVYAVGGFNGSLRVRTVDVYDGVKDQWTSIASMQERRSTLGAAVLNDLLYAVGGFDGSTGLASVEAYSYKTNEWFFVAPMNTRRSSVGVGVVEGKLYAVGGYDGASRQCLSTVEQYNPATNEWIYVADMSTRRSGAGVGVLSGQLYATGGHDGPLVRKSVEVYDPGTNTWKQVADMNMCRRNAGVCAVNGLLYVVGGDDGSCNLASVEYYNPVTDKWTLLPTNMSTGRSYAGVAVIHKSL</sequence>
<comment type="function">
    <text evidence="1 2">Substrate-specific adapter of a BCR (BTB-CUL3-RBX1) E3 ubiquitin ligase complex that acts as a regulator of ion transport in the distal nephron. The BCR(KLHL3) complex acts by mediating ubiquitination and degradation of WNK1 and WNK4, two activators of Na-Cl cotransporter SLC12A3/NCC in distal convoluted tubule cells of kidney, thereby regulating NaCl reabsorption. The BCR(KLHL3) complex also mediates ubiquitination and degradation of WNK3 (By similarity). The BCR(KLHL3) complex also mediates ubiquitination of CLDN8, a tight-junction protein required for paracellular chloride transport in the kidney, leading to its degradation (By similarity).</text>
</comment>
<comment type="pathway">
    <text evidence="2">Protein modification; protein ubiquitination.</text>
</comment>
<comment type="subunit">
    <text evidence="1 2">Homodimer. Component of the BCR(KLHL3) E3 ubiquitin ligase complex, at least composed of CUL3 and KLHL3 and RBX1 (By similarity). Interacts with CLDN8 (By similarity).</text>
</comment>
<comment type="subcellular location">
    <subcellularLocation>
        <location evidence="2">Cytoplasm</location>
        <location evidence="2">Cytoskeleton</location>
    </subcellularLocation>
    <subcellularLocation>
        <location evidence="2">Cytoplasm</location>
        <location evidence="2">Cytosol</location>
    </subcellularLocation>
</comment>
<comment type="PTM">
    <text evidence="2">Phosphorylation at Ser-433 by PKA or PKC decreases the interaction with WNK1 and WNK4, leading to inhibit their degradation by the BCR(KLHL3) complex. Phosphorylated at Ser-433 by PKC in response to angiotensin II signaling, decreasing ability to promote degradation of WNK1 and WNK4, leading to activation of Na-Cl cotransporter SLC12A3/NCC. Phosphorylation at Ser-433 is increased by insulin. Dephosphorylated at Ser-433 by calcineurin PPP3CA, promoting degradation of WNK1 and WNK4.</text>
</comment>
<comment type="similarity">
    <text evidence="4">Belongs to the KLHL3 family.</text>
</comment>
<gene>
    <name type="primary">KLHL3</name>
</gene>
<feature type="chain" id="PRO_0000286395" description="Kelch-like protein 3">
    <location>
        <begin position="1"/>
        <end position="587"/>
    </location>
</feature>
<feature type="domain" description="BTB" evidence="3">
    <location>
        <begin position="50"/>
        <end position="117"/>
    </location>
</feature>
<feature type="domain" description="BACK">
    <location>
        <begin position="152"/>
        <end position="254"/>
    </location>
</feature>
<feature type="repeat" description="Kelch 1">
    <location>
        <begin position="302"/>
        <end position="347"/>
    </location>
</feature>
<feature type="repeat" description="Kelch 2">
    <location>
        <begin position="348"/>
        <end position="394"/>
    </location>
</feature>
<feature type="repeat" description="Kelch 3">
    <location>
        <begin position="396"/>
        <end position="441"/>
    </location>
</feature>
<feature type="repeat" description="Kelch 4">
    <location>
        <begin position="442"/>
        <end position="490"/>
    </location>
</feature>
<feature type="repeat" description="Kelch 5">
    <location>
        <begin position="491"/>
        <end position="537"/>
    </location>
</feature>
<feature type="repeat" description="Kelch 6">
    <location>
        <begin position="539"/>
        <end position="585"/>
    </location>
</feature>
<feature type="modified residue" description="Phosphoserine" evidence="2">
    <location>
        <position position="10"/>
    </location>
</feature>
<feature type="modified residue" description="Phosphothreonine" evidence="2">
    <location>
        <position position="295"/>
    </location>
</feature>
<feature type="modified residue" description="Phosphothreonine" evidence="2">
    <location>
        <position position="375"/>
    </location>
</feature>
<feature type="modified residue" description="Phosphoserine" evidence="2">
    <location>
        <position position="376"/>
    </location>
</feature>
<feature type="modified residue" description="Phosphoserine" evidence="2">
    <location>
        <position position="433"/>
    </location>
</feature>
<keyword id="KW-0009">Actin-binding</keyword>
<keyword id="KW-0963">Cytoplasm</keyword>
<keyword id="KW-0206">Cytoskeleton</keyword>
<keyword id="KW-0880">Kelch repeat</keyword>
<keyword id="KW-0597">Phosphoprotein</keyword>
<keyword id="KW-1185">Reference proteome</keyword>
<keyword id="KW-0677">Repeat</keyword>
<keyword id="KW-0833">Ubl conjugation pathway</keyword>
<reference key="1">
    <citation type="submission" date="2004-11" db="EMBL/GenBank/DDBJ databases">
        <authorList>
            <consortium name="The German cDNA consortium"/>
        </authorList>
    </citation>
    <scope>NUCLEOTIDE SEQUENCE [LARGE SCALE MRNA]</scope>
    <source>
        <tissue>Kidney</tissue>
    </source>
</reference>
<proteinExistence type="evidence at transcript level"/>
<dbReference type="EMBL" id="CR857470">
    <property type="protein sequence ID" value="CAH89758.1"/>
    <property type="molecule type" value="mRNA"/>
</dbReference>
<dbReference type="RefSeq" id="NP_001127192.1">
    <property type="nucleotide sequence ID" value="NM_001133720.1"/>
</dbReference>
<dbReference type="SMR" id="Q5REP9"/>
<dbReference type="FunCoup" id="Q5REP9">
    <property type="interactions" value="117"/>
</dbReference>
<dbReference type="STRING" id="9601.ENSPPYP00000017680"/>
<dbReference type="GeneID" id="100174246"/>
<dbReference type="KEGG" id="pon:100174246"/>
<dbReference type="CTD" id="26249"/>
<dbReference type="eggNOG" id="KOG4441">
    <property type="taxonomic scope" value="Eukaryota"/>
</dbReference>
<dbReference type="InParanoid" id="Q5REP9"/>
<dbReference type="OrthoDB" id="45365at2759"/>
<dbReference type="UniPathway" id="UPA00143"/>
<dbReference type="Proteomes" id="UP000001595">
    <property type="component" value="Unplaced"/>
</dbReference>
<dbReference type="GO" id="GO:0031463">
    <property type="term" value="C:Cul3-RING ubiquitin ligase complex"/>
    <property type="evidence" value="ECO:0000250"/>
    <property type="project" value="UniProtKB"/>
</dbReference>
<dbReference type="GO" id="GO:0005856">
    <property type="term" value="C:cytoskeleton"/>
    <property type="evidence" value="ECO:0007669"/>
    <property type="project" value="UniProtKB-SubCell"/>
</dbReference>
<dbReference type="GO" id="GO:0005829">
    <property type="term" value="C:cytosol"/>
    <property type="evidence" value="ECO:0000250"/>
    <property type="project" value="UniProtKB"/>
</dbReference>
<dbReference type="GO" id="GO:0003779">
    <property type="term" value="F:actin binding"/>
    <property type="evidence" value="ECO:0007669"/>
    <property type="project" value="UniProtKB-KW"/>
</dbReference>
<dbReference type="GO" id="GO:1990756">
    <property type="term" value="F:ubiquitin-like ligase-substrate adaptor activity"/>
    <property type="evidence" value="ECO:0000250"/>
    <property type="project" value="UniProtKB"/>
</dbReference>
<dbReference type="GO" id="GO:0072156">
    <property type="term" value="P:distal tubule morphogenesis"/>
    <property type="evidence" value="ECO:0000250"/>
    <property type="project" value="UniProtKB"/>
</dbReference>
<dbReference type="GO" id="GO:0050801">
    <property type="term" value="P:monoatomic ion homeostasis"/>
    <property type="evidence" value="ECO:0000250"/>
    <property type="project" value="UniProtKB"/>
</dbReference>
<dbReference type="GO" id="GO:0070936">
    <property type="term" value="P:protein K48-linked ubiquitination"/>
    <property type="evidence" value="ECO:0000250"/>
    <property type="project" value="UniProtKB"/>
</dbReference>
<dbReference type="GO" id="GO:0016567">
    <property type="term" value="P:protein ubiquitination"/>
    <property type="evidence" value="ECO:0000250"/>
    <property type="project" value="UniProtKB"/>
</dbReference>
<dbReference type="GO" id="GO:0070294">
    <property type="term" value="P:renal sodium ion absorption"/>
    <property type="evidence" value="ECO:0000250"/>
    <property type="project" value="UniProtKB"/>
</dbReference>
<dbReference type="GO" id="GO:0006511">
    <property type="term" value="P:ubiquitin-dependent protein catabolic process"/>
    <property type="evidence" value="ECO:0000250"/>
    <property type="project" value="UniProtKB"/>
</dbReference>
<dbReference type="CDD" id="cd18513">
    <property type="entry name" value="BACK_KLHL3"/>
    <property type="match status" value="1"/>
</dbReference>
<dbReference type="CDD" id="cd18339">
    <property type="entry name" value="BTB_POZ_KLHL3"/>
    <property type="match status" value="1"/>
</dbReference>
<dbReference type="FunFam" id="1.25.40.420:FF:000001">
    <property type="entry name" value="Kelch-like family member 12"/>
    <property type="match status" value="1"/>
</dbReference>
<dbReference type="FunFam" id="2.120.10.80:FF:000002">
    <property type="entry name" value="Kelch-like family member 2"/>
    <property type="match status" value="1"/>
</dbReference>
<dbReference type="FunFam" id="3.30.710.10:FF:000001">
    <property type="entry name" value="Kelch-like family member 20"/>
    <property type="match status" value="1"/>
</dbReference>
<dbReference type="Gene3D" id="1.25.40.420">
    <property type="match status" value="1"/>
</dbReference>
<dbReference type="Gene3D" id="2.120.10.80">
    <property type="entry name" value="Kelch-type beta propeller"/>
    <property type="match status" value="1"/>
</dbReference>
<dbReference type="Gene3D" id="3.30.710.10">
    <property type="entry name" value="Potassium Channel Kv1.1, Chain A"/>
    <property type="match status" value="1"/>
</dbReference>
<dbReference type="InterPro" id="IPR011705">
    <property type="entry name" value="BACK"/>
</dbReference>
<dbReference type="InterPro" id="IPR017096">
    <property type="entry name" value="BTB-kelch_protein"/>
</dbReference>
<dbReference type="InterPro" id="IPR000210">
    <property type="entry name" value="BTB/POZ_dom"/>
</dbReference>
<dbReference type="InterPro" id="IPR015915">
    <property type="entry name" value="Kelch-typ_b-propeller"/>
</dbReference>
<dbReference type="InterPro" id="IPR006652">
    <property type="entry name" value="Kelch_1"/>
</dbReference>
<dbReference type="InterPro" id="IPR030578">
    <property type="entry name" value="KLHL3_BACK"/>
</dbReference>
<dbReference type="InterPro" id="IPR011333">
    <property type="entry name" value="SKP1/BTB/POZ_sf"/>
</dbReference>
<dbReference type="PANTHER" id="PTHR24412">
    <property type="entry name" value="KELCH PROTEIN"/>
    <property type="match status" value="1"/>
</dbReference>
<dbReference type="PANTHER" id="PTHR24412:SF179">
    <property type="entry name" value="KELCH-LIKE PROTEIN 3"/>
    <property type="match status" value="1"/>
</dbReference>
<dbReference type="Pfam" id="PF07707">
    <property type="entry name" value="BACK"/>
    <property type="match status" value="1"/>
</dbReference>
<dbReference type="Pfam" id="PF00651">
    <property type="entry name" value="BTB"/>
    <property type="match status" value="1"/>
</dbReference>
<dbReference type="Pfam" id="PF01344">
    <property type="entry name" value="Kelch_1"/>
    <property type="match status" value="6"/>
</dbReference>
<dbReference type="PIRSF" id="PIRSF037037">
    <property type="entry name" value="Kelch-like_protein_gigaxonin"/>
    <property type="match status" value="1"/>
</dbReference>
<dbReference type="PRINTS" id="PR00501">
    <property type="entry name" value="KELCHREPEAT"/>
</dbReference>
<dbReference type="SMART" id="SM00875">
    <property type="entry name" value="BACK"/>
    <property type="match status" value="1"/>
</dbReference>
<dbReference type="SMART" id="SM00225">
    <property type="entry name" value="BTB"/>
    <property type="match status" value="1"/>
</dbReference>
<dbReference type="SMART" id="SM00612">
    <property type="entry name" value="Kelch"/>
    <property type="match status" value="6"/>
</dbReference>
<dbReference type="SUPFAM" id="SSF117281">
    <property type="entry name" value="Kelch motif"/>
    <property type="match status" value="1"/>
</dbReference>
<dbReference type="SUPFAM" id="SSF54695">
    <property type="entry name" value="POZ domain"/>
    <property type="match status" value="1"/>
</dbReference>
<dbReference type="PROSITE" id="PS50097">
    <property type="entry name" value="BTB"/>
    <property type="match status" value="1"/>
</dbReference>
<evidence type="ECO:0000250" key="1">
    <source>
        <dbReference type="UniProtKB" id="E0CZ16"/>
    </source>
</evidence>
<evidence type="ECO:0000250" key="2">
    <source>
        <dbReference type="UniProtKB" id="Q9UH77"/>
    </source>
</evidence>
<evidence type="ECO:0000255" key="3">
    <source>
        <dbReference type="PROSITE-ProRule" id="PRU00037"/>
    </source>
</evidence>
<evidence type="ECO:0000305" key="4"/>
<accession>Q5REP9</accession>
<organism>
    <name type="scientific">Pongo abelii</name>
    <name type="common">Sumatran orangutan</name>
    <name type="synonym">Pongo pygmaeus abelii</name>
    <dbReference type="NCBI Taxonomy" id="9601"/>
    <lineage>
        <taxon>Eukaryota</taxon>
        <taxon>Metazoa</taxon>
        <taxon>Chordata</taxon>
        <taxon>Craniata</taxon>
        <taxon>Vertebrata</taxon>
        <taxon>Euteleostomi</taxon>
        <taxon>Mammalia</taxon>
        <taxon>Eutheria</taxon>
        <taxon>Euarchontoglires</taxon>
        <taxon>Primates</taxon>
        <taxon>Haplorrhini</taxon>
        <taxon>Catarrhini</taxon>
        <taxon>Hominidae</taxon>
        <taxon>Pongo</taxon>
    </lineage>
</organism>